<comment type="function">
    <molecule>Matrix protein p19</molecule>
    <text evidence="3">Matrix protein.</text>
</comment>
<comment type="function">
    <molecule>Capsid protein p35</molecule>
    <text evidence="3">Capsid protein.</text>
</comment>
<comment type="function">
    <text evidence="5">Matrix protein p10: Matrix protein.</text>
</comment>
<comment type="function">
    <text evidence="5">Nucleocapsid protein p14: Nucleocapsid protein.</text>
</comment>
<comment type="function">
    <text evidence="5">Capsid protein p27: capsid protein.</text>
</comment>
<comment type="function">
    <molecule>Protease 17 kDa</molecule>
    <text evidence="5 10">The aspartyl protease mediates proteolytic cleavages of Gag and Gag-Pol polyproteins during or shortly after the release of the virion from the plasma membrane. Cleavages take place as an ordered, step-wise cascade to yield mature proteins. This process is called maturation. Displays maximal activity during the budding process just prior to particle release from the cell.</text>
</comment>
<comment type="function">
    <molecule>Protease 13 kDa</molecule>
    <text evidence="5 10">The aspartyl protease mediates proteolytic cleavages of Gag and Gag-Pol polyproteins during or shortly after the release of the virion from the plasma membrane. Cleavages take place as an ordered, step-wise cascade to yield mature proteins. This process is called maturation. Displays maximal activity during the budding process just prior to particle release from the cell.</text>
</comment>
<comment type="function">
    <molecule>G-patch peptide</molecule>
    <text evidence="5">Enhances the activity of the reverse transcriptase. May be part of the mature RT.</text>
</comment>
<comment type="function">
    <molecule>Reverse transcriptase/ribonuclease H</molecule>
    <text evidence="11">RT is a multifunctional enzyme that converts the viral dimeric RNA genome into dsDNA in the cytoplasm, shortly after virus entry into the cell. This enzyme displays a DNA polymerase activity that can copy either DNA or RNA templates, and a ribonuclease H (RNase H) activity that cleaves the RNA strand of RNA-DNA heteroduplexes in a partially processive 3' to 5' endonucleasic mode. Conversion of viral genomic RNA into dsDNA requires many steps. A tRNA binds to the primer-binding site (PBS) situated at the 5' end of the viral RNA. RT uses the 3' end of the tRNA primer to perfom a short round of RNA-dependent minus-strand DNA synthesis. The reading proceeds through the U5 region and ends after the repeated (R) region which is present at both ends of viral RNA. The portion of the RNA-DNA heteroduplex is digested by the RNase H, resulting in a ssDNA product attached to the tRNA primer. This ssDNA/tRNA hybridizes with the identical R region situated at the 3' end of viral RNA. This template exchange, known as minus-strand DNA strong stop transfer, can be either intra- or intermolecular. RT uses the 3' end of this newly synthesized short ssDNA to perfom the RNA-dependent minus-strand DNA synthesis of the whole template. RNase H digests the RNA template except for a polypurine tract (PPT) situated at the 5' end of the genome. It is not clear if both polymerase and RNase H activities are simultaneous. RNase H probably can proceed both in a polymerase-dependent (RNA cut into small fragments by the same RT performing DNA synthesis) and a polymerase-independent mode (cleavage of remaining RNA fragments by free RTs). Secondly, RT performs DNA-directed plus-strand DNA synthesis using the PPT that has not been removed by RNase H as primers. PPT and tRNA primers are then removed by RNase H. The 3' and 5' ssDNA PBS regions hybridize to form a circular dsDNA intermediate. Strand displacement synthesis by RT to the PBS and PPT ends produces a blunt ended, linear dsDNA copy of the viral genome that includes long terminal repeats (LTRs) at both ends.</text>
</comment>
<comment type="function">
    <molecule>Integrase</molecule>
    <text evidence="19">Catalyzes viral DNA integration into the host chromosome, by performing a series of DNA cutting and joining reactions.</text>
</comment>
<comment type="catalytic activity">
    <reaction evidence="11">
        <text>DNA(n) + a 2'-deoxyribonucleoside 5'-triphosphate = DNA(n+1) + diphosphate</text>
        <dbReference type="Rhea" id="RHEA:22508"/>
        <dbReference type="Rhea" id="RHEA-COMP:17339"/>
        <dbReference type="Rhea" id="RHEA-COMP:17340"/>
        <dbReference type="ChEBI" id="CHEBI:33019"/>
        <dbReference type="ChEBI" id="CHEBI:61560"/>
        <dbReference type="ChEBI" id="CHEBI:173112"/>
        <dbReference type="EC" id="2.7.7.49"/>
    </reaction>
</comment>
<comment type="catalytic activity">
    <reaction evidence="11">
        <text>DNA(n) + a 2'-deoxyribonucleoside 5'-triphosphate = DNA(n+1) + diphosphate</text>
        <dbReference type="Rhea" id="RHEA:22508"/>
        <dbReference type="Rhea" id="RHEA-COMP:17339"/>
        <dbReference type="Rhea" id="RHEA-COMP:17340"/>
        <dbReference type="ChEBI" id="CHEBI:33019"/>
        <dbReference type="ChEBI" id="CHEBI:61560"/>
        <dbReference type="ChEBI" id="CHEBI:173112"/>
        <dbReference type="EC" id="2.7.7.7"/>
    </reaction>
</comment>
<comment type="catalytic activity">
    <reaction evidence="12">
        <text>Endonucleolytic cleavage to 5'-phosphomonoester.</text>
        <dbReference type="EC" id="3.1.26.4"/>
    </reaction>
</comment>
<comment type="catalytic activity">
    <reaction evidence="4">
        <text>dUTP + H2O = dUMP + diphosphate + H(+)</text>
        <dbReference type="Rhea" id="RHEA:10248"/>
        <dbReference type="ChEBI" id="CHEBI:15377"/>
        <dbReference type="ChEBI" id="CHEBI:15378"/>
        <dbReference type="ChEBI" id="CHEBI:33019"/>
        <dbReference type="ChEBI" id="CHEBI:61555"/>
        <dbReference type="ChEBI" id="CHEBI:246422"/>
        <dbReference type="EC" id="3.6.1.23"/>
    </reaction>
</comment>
<comment type="cofactor">
    <cofactor evidence="11">
        <name>Mg(2+)</name>
        <dbReference type="ChEBI" id="CHEBI:18420"/>
    </cofactor>
    <text evidence="11">The RT polymerase active site binds 2 magnesium ions.</text>
</comment>
<comment type="subunit">
    <molecule>Protease 17 kDa</molecule>
    <text evidence="17">Homodimer.</text>
</comment>
<comment type="subunit">
    <molecule>Reverse transcriptase/ribonuclease H</molecule>
    <text evidence="4">Interacts with the G-patch peptide.</text>
</comment>
<comment type="subunit">
    <molecule>G-patch peptide</molecule>
    <text evidence="4">Interacts with the reverse transcriptase/ribonuclease H.</text>
</comment>
<comment type="subunit">
    <molecule>Probable nucleocapsid protein-dUTPase</molecule>
    <text evidence="4">Homotrimer.</text>
</comment>
<comment type="subcellular location">
    <molecule>Capsid protein p35</molecule>
    <subcellularLocation>
        <location evidence="17">Virion</location>
    </subcellularLocation>
</comment>
<comment type="subcellular location">
    <molecule>Matrix protein p19</molecule>
    <subcellularLocation>
        <location evidence="17">Virion</location>
    </subcellularLocation>
</comment>
<comment type="subcellular location">
    <molecule>Probable nucleocapsid protein-dUTPase</molecule>
    <subcellularLocation>
        <location evidence="17">Virion</location>
    </subcellularLocation>
</comment>
<comment type="subcellular location">
    <molecule>Protease 13 kDa</molecule>
    <subcellularLocation>
        <location evidence="5">Virion</location>
    </subcellularLocation>
</comment>
<comment type="subcellular location">
    <molecule>Protease 17 kDa</molecule>
    <subcellularLocation>
        <location evidence="5">Virion</location>
    </subcellularLocation>
</comment>
<comment type="alternative products">
    <event type="ribosomal frameshifting"/>
    <isoform>
        <id>P03364-1</id>
        <name>Gag-Pro-Pol polyprotein</name>
        <sequence type="displayed"/>
    </isoform>
    <isoform>
        <id>P21407-1</id>
        <name>Gag-Pro polyprotein</name>
        <sequence type="external"/>
    </isoform>
    <isoform>
        <id>P21411-1</id>
        <name>Gag polyprotein</name>
        <sequence type="external"/>
    </isoform>
</comment>
<comment type="domain">
    <molecule>Gag-Pro-Pol polyprotein</molecule>
    <text evidence="17">Gag polyprotein: Late-budding domains (L domains) are short sequence motifs essential for viral particle release. They can occur individually or in close proximity within structural proteins. They interacts with sorting cellular proteins of the multivesicular body (MVB) pathway. Most of these proteins are class E vacuolar protein sorting factors belonging to ESCRT-I, ESCRT-II or ESCRT-III complexes. Gag-p35 contains one L domain: a PTAP/PSAP motif, which interacts with the UEV domain of TSG101 (Potential).</text>
</comment>
<comment type="domain">
    <molecule>Protease 17 kDa</molecule>
    <text evidence="5">The glycine-rich G-patch domain (GPD) is present at the C-terminus of the protease from which it is then detached by the protease itself.</text>
</comment>
<comment type="PTM">
    <molecule>Gag-Pro-Pol polyprotein</molecule>
    <text evidence="6">Myristoylated. Myristoylation of the matrix (MA) domain mediates the transport and binding of Gag polyproteins to the host plasma membrane and is required for the assembly of viral particles.</text>
</comment>
<comment type="PTM">
    <molecule>Gag-Pro-Pol polyprotein</molecule>
    <text evidence="20">Specific enzymatic cleavages in vivo yield mature proteins.</text>
</comment>
<comment type="PTM">
    <molecule>Protease 17 kDa</molecule>
    <text evidence="5">Released by autocatalytic processing. The protease can undergo further autoprocessing to yield 2 shorter but enzymatically active forms of 12 kDa and 13 kDa.</text>
</comment>
<comment type="miscellaneous">
    <molecule>Reverse transcriptase/ribonuclease H</molecule>
    <text evidence="11">The reverse transcriptase is an error-prone enzyme that lacks a proof-reading function. High mutations rate is a direct consequence of this characteristic. RT also displays frequent template switching leading to high recombination rate. Recombination mostly occurs between homologous regions of the two copackaged RNA genomes. If these two RNA molecules derive from different viral strains, reverse transcription will give rise to highly recombinated proviral DNAs.</text>
</comment>
<comment type="miscellaneous">
    <molecule>Isoform Gag-Pro-Pol polyprotein</molecule>
    <text evidence="18">Produced by -1 ribosomal frameshiftings between gag-pro and pro-pol.</text>
</comment>
<comment type="sequence caution" evidence="17">
    <conflict type="erroneous initiation">
        <sequence resource="EMBL-CDS" id="AAA66453"/>
    </conflict>
</comment>
<organismHost>
    <name type="scientific">Mammalia</name>
    <dbReference type="NCBI Taxonomy" id="40674"/>
</organismHost>
<evidence type="ECO:0000250" key="1">
    <source>
        <dbReference type="UniProtKB" id="P03354"/>
    </source>
</evidence>
<evidence type="ECO:0000250" key="2">
    <source>
        <dbReference type="UniProtKB" id="P03365"/>
    </source>
</evidence>
<evidence type="ECO:0000250" key="3">
    <source>
        <dbReference type="UniProtKB" id="P07567"/>
    </source>
</evidence>
<evidence type="ECO:0000250" key="4">
    <source>
        <dbReference type="UniProtKB" id="P07570"/>
    </source>
</evidence>
<evidence type="ECO:0000250" key="5">
    <source>
        <dbReference type="UniProtKB" id="P07572"/>
    </source>
</evidence>
<evidence type="ECO:0000250" key="6">
    <source>
        <dbReference type="UniProtKB" id="P10258"/>
    </source>
</evidence>
<evidence type="ECO:0000250" key="7">
    <source>
        <dbReference type="UniProtKB" id="P11283"/>
    </source>
</evidence>
<evidence type="ECO:0000255" key="8"/>
<evidence type="ECO:0000255" key="9">
    <source>
        <dbReference type="PROSITE-ProRule" id="PRU00092"/>
    </source>
</evidence>
<evidence type="ECO:0000255" key="10">
    <source>
        <dbReference type="PROSITE-ProRule" id="PRU00275"/>
    </source>
</evidence>
<evidence type="ECO:0000255" key="11">
    <source>
        <dbReference type="PROSITE-ProRule" id="PRU00405"/>
    </source>
</evidence>
<evidence type="ECO:0000255" key="12">
    <source>
        <dbReference type="PROSITE-ProRule" id="PRU00408"/>
    </source>
</evidence>
<evidence type="ECO:0000255" key="13">
    <source>
        <dbReference type="PROSITE-ProRule" id="PRU00450"/>
    </source>
</evidence>
<evidence type="ECO:0000255" key="14">
    <source>
        <dbReference type="PROSITE-ProRule" id="PRU00457"/>
    </source>
</evidence>
<evidence type="ECO:0000255" key="15">
    <source>
        <dbReference type="PROSITE-ProRule" id="PRU00506"/>
    </source>
</evidence>
<evidence type="ECO:0000256" key="16">
    <source>
        <dbReference type="SAM" id="MobiDB-lite"/>
    </source>
</evidence>
<evidence type="ECO:0000305" key="17"/>
<evidence type="ECO:0000305" key="18">
    <source>
    </source>
</evidence>
<evidence type="ECO:0000305" key="19">
    <source>
    </source>
</evidence>
<evidence type="ECO:0000305" key="20">
    <source>
    </source>
</evidence>
<proteinExistence type="evidence at protein level"/>
<keyword id="KW-0064">Aspartyl protease</keyword>
<keyword id="KW-0903">Direct protein sequencing</keyword>
<keyword id="KW-0229">DNA integration</keyword>
<keyword id="KW-0233">DNA recombination</keyword>
<keyword id="KW-0238">DNA-binding</keyword>
<keyword id="KW-0239">DNA-directed DNA polymerase</keyword>
<keyword id="KW-0255">Endonuclease</keyword>
<keyword id="KW-0378">Hydrolase</keyword>
<keyword id="KW-0449">Lipoprotein</keyword>
<keyword id="KW-0460">Magnesium</keyword>
<keyword id="KW-0479">Metal-binding</keyword>
<keyword id="KW-0511">Multifunctional enzyme</keyword>
<keyword id="KW-0519">Myristate</keyword>
<keyword id="KW-0540">Nuclease</keyword>
<keyword id="KW-0548">Nucleotidyltransferase</keyword>
<keyword id="KW-0645">Protease</keyword>
<keyword id="KW-0688">Ribosomal frameshifting</keyword>
<keyword id="KW-0694">RNA-binding</keyword>
<keyword id="KW-0695">RNA-directed DNA polymerase</keyword>
<keyword id="KW-0808">Transferase</keyword>
<keyword id="KW-1179">Viral genome integration</keyword>
<keyword id="KW-0468">Viral matrix protein</keyword>
<keyword id="KW-0543">Viral nucleoprotein</keyword>
<keyword id="KW-0946">Virion</keyword>
<keyword id="KW-1160">Virus entry into host cell</keyword>
<keyword id="KW-0862">Zinc</keyword>
<keyword id="KW-0863">Zinc-finger</keyword>
<gene>
    <name type="primary">pol</name>
</gene>
<name>POL_SMRVH</name>
<protein>
    <recommendedName>
        <fullName>Gag-Pro-Pol polyprotein</fullName>
    </recommendedName>
    <component>
        <recommendedName>
            <fullName>Matrix protein p19</fullName>
        </recommendedName>
    </component>
    <component>
        <recommendedName>
            <fullName>Core protein p16</fullName>
        </recommendedName>
    </component>
    <component>
        <recommendedName>
            <fullName>Capsid protein p35</fullName>
        </recommendedName>
        <alternativeName>
            <fullName>Capsid protein p34</fullName>
        </alternativeName>
    </component>
    <component>
        <recommendedName>
            <fullName>Probable nucleocapsid protein-dUTPase</fullName>
            <shortName>NC-dUTPase</shortName>
            <ecNumber evidence="7">3.6.1.23</ecNumber>
        </recommendedName>
    </component>
    <component>
        <recommendedName>
            <fullName evidence="5">Protease 17 kDa</fullName>
            <ecNumber evidence="10">3.4.23.-</ecNumber>
        </recommendedName>
    </component>
    <component>
        <recommendedName>
            <fullName evidence="5">Protease 13 kDa</fullName>
            <ecNumber evidence="10">3.4.23.-</ecNumber>
        </recommendedName>
    </component>
    <component>
        <recommendedName>
            <fullName evidence="5">G-patch peptide</fullName>
        </recommendedName>
    </component>
    <component>
        <recommendedName>
            <fullName>Reverse transcriptase/ribonuclease H</fullName>
            <shortName>RT</shortName>
            <ecNumber evidence="11">2.7.7.49</ecNumber>
            <ecNumber evidence="11">2.7.7.7</ecNumber>
            <ecNumber evidence="12">3.1.26.4</ecNumber>
        </recommendedName>
    </component>
    <component>
        <recommendedName>
            <fullName>Integrase</fullName>
            <shortName>IN</shortName>
            <ecNumber evidence="7">2.7.7.-</ecNumber>
            <ecNumber evidence="7">3.1.-.-</ecNumber>
        </recommendedName>
    </component>
</protein>
<accession>P03364</accession>
<organism>
    <name type="scientific">Squirrel monkey retrovirus</name>
    <name type="common">SMRV-H</name>
    <name type="synonym">SMRV-HLB</name>
    <dbReference type="NCBI Taxonomy" id="11856"/>
    <lineage>
        <taxon>Viruses</taxon>
        <taxon>Riboviria</taxon>
        <taxon>Pararnavirae</taxon>
        <taxon>Artverviricota</taxon>
        <taxon>Revtraviricetes</taxon>
        <taxon>Ortervirales</taxon>
        <taxon>Retroviridae</taxon>
        <taxon>Orthoretrovirinae</taxon>
        <taxon>Betaretrovirus</taxon>
    </lineage>
</organism>
<feature type="initiator methionine" description="Removed; by host" evidence="8">
    <location>
        <position position="1"/>
    </location>
</feature>
<feature type="chain" id="PRO_0000125496" description="Gag-Pro-Pol polyprotein">
    <location>
        <begin position="2"/>
        <end position="1880"/>
    </location>
</feature>
<feature type="chain" id="PRO_0000443148" description="Matrix protein p19">
    <location>
        <begin position="2"/>
        <end position="163"/>
    </location>
</feature>
<feature type="chain" id="PRO_0000443149" description="Core protein p16">
    <location>
        <begin position="164"/>
        <end position="318"/>
    </location>
</feature>
<feature type="chain" id="PRO_0000443150" description="Capsid protein p35">
    <location>
        <begin position="319"/>
        <end position="585"/>
    </location>
</feature>
<feature type="chain" id="PRO_0000443151" description="Probable nucleocapsid protein-dUTPase">
    <location>
        <begin position="586"/>
        <end position="842"/>
    </location>
</feature>
<feature type="chain" id="PRO_0000443152" description="Protease 17 kDa">
    <location>
        <begin position="843"/>
        <end position="996"/>
    </location>
</feature>
<feature type="chain" id="PRO_0000443153" description="Protease 13 kDa">
    <location>
        <begin position="843"/>
        <end position="960"/>
    </location>
</feature>
<feature type="peptide" id="PRO_0000443154" description="G-patch peptide">
    <location>
        <begin position="961"/>
        <end position="997"/>
    </location>
</feature>
<feature type="chain" id="PRO_0000443155" description="Reverse transcriptase/ribonuclease H">
    <location>
        <begin position="998"/>
        <end position="1589" status="uncertain"/>
    </location>
</feature>
<feature type="chain" id="PRO_0000443156" description="Integrase">
    <location>
        <begin position="1590" status="uncertain"/>
        <end position="1880"/>
    </location>
</feature>
<feature type="domain" description="Peptidase A2" evidence="10">
    <location>
        <begin position="863"/>
        <end position="939"/>
    </location>
</feature>
<feature type="domain" description="G-patch" evidence="9">
    <location>
        <begin position="950"/>
        <end position="996"/>
    </location>
</feature>
<feature type="domain" description="Reverse transcriptase" evidence="11">
    <location>
        <begin position="1044"/>
        <end position="1232"/>
    </location>
</feature>
<feature type="domain" description="RNase H type-1" evidence="12">
    <location>
        <begin position="1455"/>
        <end position="1586"/>
    </location>
</feature>
<feature type="domain" description="Integrase catalytic" evidence="14">
    <location>
        <begin position="1643"/>
        <end position="1804"/>
    </location>
</feature>
<feature type="zinc finger region" description="Integrase-type" evidence="13">
    <location>
        <begin position="1589"/>
        <end position="1630"/>
    </location>
</feature>
<feature type="DNA-binding region" description="Integrase-type" evidence="15">
    <location>
        <begin position="1809"/>
        <end position="1858"/>
    </location>
</feature>
<feature type="region of interest" description="Disordered" evidence="16">
    <location>
        <begin position="115"/>
        <end position="208"/>
    </location>
</feature>
<feature type="region of interest" description="Disordered" evidence="16">
    <location>
        <begin position="323"/>
        <end position="376"/>
    </location>
</feature>
<feature type="region of interest" description="Disordered" evidence="16">
    <location>
        <begin position="446"/>
        <end position="469"/>
    </location>
</feature>
<feature type="region of interest" description="Disordered" evidence="16">
    <location>
        <begin position="1859"/>
        <end position="1880"/>
    </location>
</feature>
<feature type="compositionally biased region" description="Polar residues" evidence="16">
    <location>
        <begin position="117"/>
        <end position="132"/>
    </location>
</feature>
<feature type="compositionally biased region" description="Polar residues" evidence="16">
    <location>
        <begin position="193"/>
        <end position="206"/>
    </location>
</feature>
<feature type="compositionally biased region" description="Polar residues" evidence="16">
    <location>
        <begin position="323"/>
        <end position="334"/>
    </location>
</feature>
<feature type="compositionally biased region" description="Acidic residues" evidence="16">
    <location>
        <begin position="346"/>
        <end position="366"/>
    </location>
</feature>
<feature type="compositionally biased region" description="Basic and acidic residues" evidence="16">
    <location>
        <begin position="446"/>
        <end position="459"/>
    </location>
</feature>
<feature type="active site" description="Protease; shared with dimeric partner" evidence="10">
    <location>
        <position position="868"/>
    </location>
</feature>
<feature type="binding site" evidence="11">
    <location>
        <position position="1109"/>
    </location>
    <ligand>
        <name>Mg(2+)</name>
        <dbReference type="ChEBI" id="CHEBI:18420"/>
        <label>1</label>
        <note>catalytic; for reverse transcriptase activity</note>
    </ligand>
</feature>
<feature type="binding site" evidence="11">
    <location>
        <position position="1184"/>
    </location>
    <ligand>
        <name>Mg(2+)</name>
        <dbReference type="ChEBI" id="CHEBI:18420"/>
        <label>1</label>
        <note>catalytic; for reverse transcriptase activity</note>
    </ligand>
</feature>
<feature type="binding site" evidence="11">
    <location>
        <position position="1185"/>
    </location>
    <ligand>
        <name>Mg(2+)</name>
        <dbReference type="ChEBI" id="CHEBI:18420"/>
        <label>1</label>
        <note>catalytic; for reverse transcriptase activity</note>
    </ligand>
</feature>
<feature type="binding site" evidence="12">
    <location>
        <position position="1464"/>
    </location>
    <ligand>
        <name>Mg(2+)</name>
        <dbReference type="ChEBI" id="CHEBI:18420"/>
        <label>2</label>
        <note>for RNase H activity</note>
    </ligand>
</feature>
<feature type="binding site" evidence="12">
    <location>
        <position position="1493"/>
    </location>
    <ligand>
        <name>Mg(2+)</name>
        <dbReference type="ChEBI" id="CHEBI:18420"/>
        <label>2</label>
        <note>for RNase H activity</note>
    </ligand>
</feature>
<feature type="binding site" evidence="12">
    <location>
        <position position="1514"/>
    </location>
    <ligand>
        <name>Mg(2+)</name>
        <dbReference type="ChEBI" id="CHEBI:18420"/>
        <label>2</label>
        <note>for RNase H activity</note>
    </ligand>
</feature>
<feature type="binding site" evidence="12">
    <location>
        <position position="1578"/>
    </location>
    <ligand>
        <name>Mg(2+)</name>
        <dbReference type="ChEBI" id="CHEBI:18420"/>
        <label>2</label>
        <note>for RNase H activity</note>
    </ligand>
</feature>
<feature type="binding site" evidence="13">
    <location>
        <position position="1598"/>
    </location>
    <ligand>
        <name>Zn(2+)</name>
        <dbReference type="ChEBI" id="CHEBI:29105"/>
    </ligand>
</feature>
<feature type="binding site" evidence="13">
    <location>
        <position position="1602"/>
    </location>
    <ligand>
        <name>Zn(2+)</name>
        <dbReference type="ChEBI" id="CHEBI:29105"/>
    </ligand>
</feature>
<feature type="binding site" evidence="13">
    <location>
        <position position="1626"/>
    </location>
    <ligand>
        <name>Zn(2+)</name>
        <dbReference type="ChEBI" id="CHEBI:29105"/>
    </ligand>
</feature>
<feature type="binding site" evidence="13">
    <location>
        <position position="1629"/>
    </location>
    <ligand>
        <name>Zn(2+)</name>
        <dbReference type="ChEBI" id="CHEBI:29105"/>
    </ligand>
</feature>
<feature type="binding site" evidence="14">
    <location>
        <position position="1654"/>
    </location>
    <ligand>
        <name>Mg(2+)</name>
        <dbReference type="ChEBI" id="CHEBI:18420"/>
        <label>3</label>
        <note>catalytic; for integrase activity</note>
    </ligand>
</feature>
<feature type="binding site" evidence="14">
    <location>
        <position position="1711"/>
    </location>
    <ligand>
        <name>Mg(2+)</name>
        <dbReference type="ChEBI" id="CHEBI:18420"/>
        <label>3</label>
        <note>catalytic; for integrase activity</note>
    </ligand>
</feature>
<feature type="binding site" evidence="1">
    <location>
        <position position="1747"/>
    </location>
    <ligand>
        <name>Mg(2+)</name>
        <dbReference type="ChEBI" id="CHEBI:18420"/>
        <label>3</label>
        <note>catalytic; for integrase activity</note>
    </ligand>
</feature>
<feature type="site" description="Cleavage; by viral protease" evidence="20">
    <location>
        <begin position="163"/>
        <end position="164"/>
    </location>
</feature>
<feature type="site" description="Cleavage; by viral protease" evidence="20">
    <location>
        <begin position="318"/>
        <end position="319"/>
    </location>
</feature>
<feature type="site" description="Cleavage; by viral protease" evidence="20">
    <location>
        <begin position="585"/>
        <end position="586"/>
    </location>
</feature>
<feature type="site" description="Cleavage; by viral protease" evidence="20">
    <location>
        <begin position="648"/>
        <end position="649"/>
    </location>
</feature>
<feature type="site" description="Cleavage; by viral protease" evidence="5">
    <location>
        <begin position="842"/>
        <end position="843"/>
    </location>
</feature>
<feature type="site" description="Cleavage; by viral protease" evidence="5">
    <location>
        <begin position="960"/>
        <end position="961"/>
    </location>
</feature>
<feature type="site" description="Cleavage; by viral protease" evidence="5">
    <location>
        <begin position="997"/>
        <end position="998"/>
    </location>
</feature>
<feature type="site" description="Cleavage; by viral protease" evidence="2">
    <location>
        <begin position="1589"/>
        <end position="1590"/>
    </location>
</feature>
<feature type="lipid moiety-binding region" description="N-myristoyl glycine; by host" evidence="8">
    <location>
        <position position="2"/>
    </location>
</feature>
<reference key="1">
    <citation type="journal article" date="1988" name="Virology">
        <title>Molecular cloning, complete nucleotide sequence, and gene structure of the provirus genome of a retrovirus produced in a human lymphoblastoid cell line.</title>
        <authorList>
            <person name="Oda T."/>
            <person name="Ikeda S."/>
            <person name="Watanabe S."/>
            <person name="Hatsushika M."/>
            <person name="Akiyama K."/>
            <person name="Mitsunobu F."/>
        </authorList>
    </citation>
    <scope>NUCLEOTIDE SEQUENCE [GENOMIC RNA]</scope>
    <scope>PROTEIN SEQUENCE OF 319-346</scope>
    <scope>PROTEOLYTIC CLEAVAGE (GAG-PRO-POL POLYPROTEIN)</scope>
</reference>
<reference key="2">
    <citation type="journal article" date="1984" name="Science">
        <title>Major pol gene progenitors in the evolution of oncoviruses.</title>
        <authorList>
            <person name="Chiu I.-M."/>
            <person name="Callahan R."/>
            <person name="Tronick S.R."/>
            <person name="Schlom J."/>
            <person name="Aaronson S.A."/>
        </authorList>
    </citation>
    <scope>NUCLEOTIDE SEQUENCE [GENOMIC RNA] OF 595-774</scope>
</reference>
<reference key="3">
    <citation type="journal article" date="2013" name="Biomed. Res. Int.">
        <title>A genome-wide analysis of RNA pseudoknots that stimulate efficient -1 ribosomal frameshifting or readthrough in animal viruses.</title>
        <authorList>
            <person name="Huang X."/>
            <person name="Cheng Q."/>
            <person name="Du Z."/>
        </authorList>
    </citation>
    <scope>RIBOSOMAL FRAMESHIFT</scope>
</reference>
<reference key="4">
    <citation type="journal article" date="2017" name="Curr. Opin. Struct. Biol.">
        <title>Retroviral intasomes arising.</title>
        <authorList>
            <person name="Engelman A.N."/>
            <person name="Cherepanov P."/>
        </authorList>
    </citation>
    <scope>REVIEW (INTEGRASE)</scope>
</reference>
<dbReference type="EC" id="3.6.1.23" evidence="7"/>
<dbReference type="EC" id="3.4.23.-" evidence="10"/>
<dbReference type="EC" id="2.7.7.49" evidence="11"/>
<dbReference type="EC" id="2.7.7.7" evidence="11"/>
<dbReference type="EC" id="3.1.26.4" evidence="12"/>
<dbReference type="EC" id="2.7.7.-" evidence="7"/>
<dbReference type="EC" id="3.1.-.-" evidence="7"/>
<dbReference type="EMBL" id="K01706">
    <property type="protein sequence ID" value="AAA46815.1"/>
    <property type="molecule type" value="Genomic_RNA"/>
</dbReference>
<dbReference type="EMBL" id="M23385">
    <property type="protein sequence ID" value="AAA66453.1"/>
    <property type="status" value="ALT_INIT"/>
    <property type="molecule type" value="Genomic_RNA"/>
</dbReference>
<dbReference type="PIR" id="A05072">
    <property type="entry name" value="A05072"/>
</dbReference>
<dbReference type="PIR" id="C31827">
    <property type="entry name" value="GNLJHD"/>
</dbReference>
<dbReference type="RefSeq" id="NP_041261.1">
    <property type="nucleotide sequence ID" value="NC_001514.1"/>
</dbReference>
<dbReference type="SMR" id="P03364"/>
<dbReference type="GeneID" id="1491962"/>
<dbReference type="KEGG" id="vg:1491962"/>
<dbReference type="Proteomes" id="UP000007223">
    <property type="component" value="Segment"/>
</dbReference>
<dbReference type="GO" id="GO:0019013">
    <property type="term" value="C:viral nucleocapsid"/>
    <property type="evidence" value="ECO:0007669"/>
    <property type="project" value="UniProtKB-KW"/>
</dbReference>
<dbReference type="GO" id="GO:0004190">
    <property type="term" value="F:aspartic-type endopeptidase activity"/>
    <property type="evidence" value="ECO:0007669"/>
    <property type="project" value="UniProtKB-KW"/>
</dbReference>
<dbReference type="GO" id="GO:0003677">
    <property type="term" value="F:DNA binding"/>
    <property type="evidence" value="ECO:0007669"/>
    <property type="project" value="UniProtKB-KW"/>
</dbReference>
<dbReference type="GO" id="GO:0003887">
    <property type="term" value="F:DNA-directed DNA polymerase activity"/>
    <property type="evidence" value="ECO:0007669"/>
    <property type="project" value="UniProtKB-KW"/>
</dbReference>
<dbReference type="GO" id="GO:0004170">
    <property type="term" value="F:dUTP diphosphatase activity"/>
    <property type="evidence" value="ECO:0007669"/>
    <property type="project" value="UniProtKB-EC"/>
</dbReference>
<dbReference type="GO" id="GO:0035613">
    <property type="term" value="F:RNA stem-loop binding"/>
    <property type="evidence" value="ECO:0007669"/>
    <property type="project" value="TreeGrafter"/>
</dbReference>
<dbReference type="GO" id="GO:0003964">
    <property type="term" value="F:RNA-directed DNA polymerase activity"/>
    <property type="evidence" value="ECO:0007669"/>
    <property type="project" value="UniProtKB-KW"/>
</dbReference>
<dbReference type="GO" id="GO:0004523">
    <property type="term" value="F:RNA-DNA hybrid ribonuclease activity"/>
    <property type="evidence" value="ECO:0007669"/>
    <property type="project" value="UniProtKB-EC"/>
</dbReference>
<dbReference type="GO" id="GO:0039660">
    <property type="term" value="F:structural constituent of virion"/>
    <property type="evidence" value="ECO:0007669"/>
    <property type="project" value="UniProtKB-KW"/>
</dbReference>
<dbReference type="GO" id="GO:0008270">
    <property type="term" value="F:zinc ion binding"/>
    <property type="evidence" value="ECO:0007669"/>
    <property type="project" value="UniProtKB-KW"/>
</dbReference>
<dbReference type="GO" id="GO:0015074">
    <property type="term" value="P:DNA integration"/>
    <property type="evidence" value="ECO:0007669"/>
    <property type="project" value="UniProtKB-KW"/>
</dbReference>
<dbReference type="GO" id="GO:0006310">
    <property type="term" value="P:DNA recombination"/>
    <property type="evidence" value="ECO:0007669"/>
    <property type="project" value="UniProtKB-KW"/>
</dbReference>
<dbReference type="GO" id="GO:0075713">
    <property type="term" value="P:establishment of integrated proviral latency"/>
    <property type="evidence" value="ECO:0007669"/>
    <property type="project" value="UniProtKB-KW"/>
</dbReference>
<dbReference type="GO" id="GO:0006508">
    <property type="term" value="P:proteolysis"/>
    <property type="evidence" value="ECO:0007669"/>
    <property type="project" value="UniProtKB-KW"/>
</dbReference>
<dbReference type="GO" id="GO:0046718">
    <property type="term" value="P:symbiont entry into host cell"/>
    <property type="evidence" value="ECO:0007669"/>
    <property type="project" value="UniProtKB-KW"/>
</dbReference>
<dbReference type="GO" id="GO:0044826">
    <property type="term" value="P:viral genome integration into host DNA"/>
    <property type="evidence" value="ECO:0007669"/>
    <property type="project" value="UniProtKB-KW"/>
</dbReference>
<dbReference type="GO" id="GO:0075523">
    <property type="term" value="P:viral translational frameshifting"/>
    <property type="evidence" value="ECO:0007669"/>
    <property type="project" value="UniProtKB-KW"/>
</dbReference>
<dbReference type="CDD" id="cd05482">
    <property type="entry name" value="HIV_retropepsin_like"/>
    <property type="match status" value="1"/>
</dbReference>
<dbReference type="CDD" id="cd09273">
    <property type="entry name" value="RNase_HI_RT_Bel"/>
    <property type="match status" value="1"/>
</dbReference>
<dbReference type="CDD" id="cd01645">
    <property type="entry name" value="RT_Rtv"/>
    <property type="match status" value="1"/>
</dbReference>
<dbReference type="CDD" id="cd07557">
    <property type="entry name" value="trimeric_dUTPase"/>
    <property type="match status" value="1"/>
</dbReference>
<dbReference type="Gene3D" id="1.10.10.200">
    <property type="match status" value="1"/>
</dbReference>
<dbReference type="Gene3D" id="1.10.1200.30">
    <property type="match status" value="1"/>
</dbReference>
<dbReference type="Gene3D" id="2.70.40.10">
    <property type="match status" value="1"/>
</dbReference>
<dbReference type="Gene3D" id="3.30.70.270">
    <property type="match status" value="2"/>
</dbReference>
<dbReference type="Gene3D" id="2.40.70.10">
    <property type="entry name" value="Acid Proteases"/>
    <property type="match status" value="1"/>
</dbReference>
<dbReference type="Gene3D" id="3.10.10.10">
    <property type="entry name" value="HIV Type 1 Reverse Transcriptase, subunit A, domain 1"/>
    <property type="match status" value="1"/>
</dbReference>
<dbReference type="Gene3D" id="1.10.375.10">
    <property type="entry name" value="Human Immunodeficiency Virus Type 1 Capsid Protein"/>
    <property type="match status" value="1"/>
</dbReference>
<dbReference type="Gene3D" id="2.30.30.10">
    <property type="entry name" value="Integrase, C-terminal domain superfamily, retroviral"/>
    <property type="match status" value="1"/>
</dbReference>
<dbReference type="Gene3D" id="1.10.150.490">
    <property type="entry name" value="Retroviral GAG p10 protein"/>
    <property type="match status" value="1"/>
</dbReference>
<dbReference type="Gene3D" id="3.30.420.10">
    <property type="entry name" value="Ribonuclease H-like superfamily/Ribonuclease H"/>
    <property type="match status" value="2"/>
</dbReference>
<dbReference type="InterPro" id="IPR001969">
    <property type="entry name" value="Aspartic_peptidase_AS"/>
</dbReference>
<dbReference type="InterPro" id="IPR003322">
    <property type="entry name" value="B_retro_matrix"/>
</dbReference>
<dbReference type="InterPro" id="IPR038124">
    <property type="entry name" value="B_retro_matrix_sf"/>
</dbReference>
<dbReference type="InterPro" id="IPR043502">
    <property type="entry name" value="DNA/RNA_pol_sf"/>
</dbReference>
<dbReference type="InterPro" id="IPR029054">
    <property type="entry name" value="dUTPase-like"/>
</dbReference>
<dbReference type="InterPro" id="IPR036157">
    <property type="entry name" value="dUTPase-like_sf"/>
</dbReference>
<dbReference type="InterPro" id="IPR033704">
    <property type="entry name" value="dUTPase_trimeric"/>
</dbReference>
<dbReference type="InterPro" id="IPR000467">
    <property type="entry name" value="G_patch_dom"/>
</dbReference>
<dbReference type="InterPro" id="IPR045345">
    <property type="entry name" value="Gag_p24_C"/>
</dbReference>
<dbReference type="InterPro" id="IPR017856">
    <property type="entry name" value="Integrase-like_N"/>
</dbReference>
<dbReference type="InterPro" id="IPR036862">
    <property type="entry name" value="Integrase_C_dom_sf_retrovir"/>
</dbReference>
<dbReference type="InterPro" id="IPR001037">
    <property type="entry name" value="Integrase_C_retrovir"/>
</dbReference>
<dbReference type="InterPro" id="IPR001584">
    <property type="entry name" value="Integrase_cat-core"/>
</dbReference>
<dbReference type="InterPro" id="IPR003308">
    <property type="entry name" value="Integrase_Zn-bd_dom_N"/>
</dbReference>
<dbReference type="InterPro" id="IPR001995">
    <property type="entry name" value="Peptidase_A2_cat"/>
</dbReference>
<dbReference type="InterPro" id="IPR021109">
    <property type="entry name" value="Peptidase_aspartic_dom_sf"/>
</dbReference>
<dbReference type="InterPro" id="IPR034170">
    <property type="entry name" value="Retropepsin-like_cat_dom"/>
</dbReference>
<dbReference type="InterPro" id="IPR018061">
    <property type="entry name" value="Retropepsins"/>
</dbReference>
<dbReference type="InterPro" id="IPR008916">
    <property type="entry name" value="Retrov_capsid_C"/>
</dbReference>
<dbReference type="InterPro" id="IPR008919">
    <property type="entry name" value="Retrov_capsid_N"/>
</dbReference>
<dbReference type="InterPro" id="IPR010999">
    <property type="entry name" value="Retrovr_matrix"/>
</dbReference>
<dbReference type="InterPro" id="IPR043128">
    <property type="entry name" value="Rev_trsase/Diguanyl_cyclase"/>
</dbReference>
<dbReference type="InterPro" id="IPR012337">
    <property type="entry name" value="RNaseH-like_sf"/>
</dbReference>
<dbReference type="InterPro" id="IPR002156">
    <property type="entry name" value="RNaseH_domain"/>
</dbReference>
<dbReference type="InterPro" id="IPR036397">
    <property type="entry name" value="RNaseH_sf"/>
</dbReference>
<dbReference type="InterPro" id="IPR000477">
    <property type="entry name" value="RT_dom"/>
</dbReference>
<dbReference type="InterPro" id="IPR010661">
    <property type="entry name" value="RVT_thumb"/>
</dbReference>
<dbReference type="InterPro" id="IPR036875">
    <property type="entry name" value="Znf_CCHC_sf"/>
</dbReference>
<dbReference type="PANTHER" id="PTHR41694">
    <property type="entry name" value="ENDOGENOUS RETROVIRUS GROUP K MEMBER POL PROTEIN"/>
    <property type="match status" value="1"/>
</dbReference>
<dbReference type="PANTHER" id="PTHR41694:SF3">
    <property type="entry name" value="RNA-DIRECTED DNA POLYMERASE-RELATED"/>
    <property type="match status" value="1"/>
</dbReference>
<dbReference type="Pfam" id="PF00692">
    <property type="entry name" value="dUTPase"/>
    <property type="match status" value="1"/>
</dbReference>
<dbReference type="Pfam" id="PF01585">
    <property type="entry name" value="G-patch"/>
    <property type="match status" value="1"/>
</dbReference>
<dbReference type="Pfam" id="PF02337">
    <property type="entry name" value="Gag_p10"/>
    <property type="match status" value="1"/>
</dbReference>
<dbReference type="Pfam" id="PF00607">
    <property type="entry name" value="Gag_p24"/>
    <property type="match status" value="1"/>
</dbReference>
<dbReference type="Pfam" id="PF19317">
    <property type="entry name" value="Gag_p24_C"/>
    <property type="match status" value="1"/>
</dbReference>
<dbReference type="Pfam" id="PF00552">
    <property type="entry name" value="IN_DBD_C"/>
    <property type="match status" value="1"/>
</dbReference>
<dbReference type="Pfam" id="PF02022">
    <property type="entry name" value="Integrase_Zn"/>
    <property type="match status" value="1"/>
</dbReference>
<dbReference type="Pfam" id="PF00075">
    <property type="entry name" value="RNase_H"/>
    <property type="match status" value="1"/>
</dbReference>
<dbReference type="Pfam" id="PF00665">
    <property type="entry name" value="rve"/>
    <property type="match status" value="1"/>
</dbReference>
<dbReference type="Pfam" id="PF00077">
    <property type="entry name" value="RVP"/>
    <property type="match status" value="1"/>
</dbReference>
<dbReference type="Pfam" id="PF00078">
    <property type="entry name" value="RVT_1"/>
    <property type="match status" value="1"/>
</dbReference>
<dbReference type="Pfam" id="PF06817">
    <property type="entry name" value="RVT_thumb"/>
    <property type="match status" value="1"/>
</dbReference>
<dbReference type="Pfam" id="PF14787">
    <property type="entry name" value="zf-CCHC_5"/>
    <property type="match status" value="1"/>
</dbReference>
<dbReference type="SMART" id="SM00443">
    <property type="entry name" value="G_patch"/>
    <property type="match status" value="1"/>
</dbReference>
<dbReference type="SUPFAM" id="SSF50630">
    <property type="entry name" value="Acid proteases"/>
    <property type="match status" value="1"/>
</dbReference>
<dbReference type="SUPFAM" id="SSF50122">
    <property type="entry name" value="DNA-binding domain of retroviral integrase"/>
    <property type="match status" value="1"/>
</dbReference>
<dbReference type="SUPFAM" id="SSF56672">
    <property type="entry name" value="DNA/RNA polymerases"/>
    <property type="match status" value="1"/>
</dbReference>
<dbReference type="SUPFAM" id="SSF51283">
    <property type="entry name" value="dUTPase-like"/>
    <property type="match status" value="1"/>
</dbReference>
<dbReference type="SUPFAM" id="SSF46919">
    <property type="entry name" value="N-terminal Zn binding domain of HIV integrase"/>
    <property type="match status" value="1"/>
</dbReference>
<dbReference type="SUPFAM" id="SSF47836">
    <property type="entry name" value="Retroviral matrix proteins"/>
    <property type="match status" value="1"/>
</dbReference>
<dbReference type="SUPFAM" id="SSF47353">
    <property type="entry name" value="Retrovirus capsid dimerization domain-like"/>
    <property type="match status" value="1"/>
</dbReference>
<dbReference type="SUPFAM" id="SSF47943">
    <property type="entry name" value="Retrovirus capsid protein, N-terminal core domain"/>
    <property type="match status" value="1"/>
</dbReference>
<dbReference type="SUPFAM" id="SSF57756">
    <property type="entry name" value="Retrovirus zinc finger-like domains"/>
    <property type="match status" value="1"/>
</dbReference>
<dbReference type="SUPFAM" id="SSF53098">
    <property type="entry name" value="Ribonuclease H-like"/>
    <property type="match status" value="2"/>
</dbReference>
<dbReference type="PROSITE" id="PS50175">
    <property type="entry name" value="ASP_PROT_RETROV"/>
    <property type="match status" value="1"/>
</dbReference>
<dbReference type="PROSITE" id="PS00141">
    <property type="entry name" value="ASP_PROTEASE"/>
    <property type="match status" value="1"/>
</dbReference>
<dbReference type="PROSITE" id="PS50174">
    <property type="entry name" value="G_PATCH"/>
    <property type="match status" value="1"/>
</dbReference>
<dbReference type="PROSITE" id="PS50994">
    <property type="entry name" value="INTEGRASE"/>
    <property type="match status" value="1"/>
</dbReference>
<dbReference type="PROSITE" id="PS51027">
    <property type="entry name" value="INTEGRASE_DBD"/>
    <property type="match status" value="1"/>
</dbReference>
<dbReference type="PROSITE" id="PS50879">
    <property type="entry name" value="RNASE_H_1"/>
    <property type="match status" value="1"/>
</dbReference>
<dbReference type="PROSITE" id="PS50878">
    <property type="entry name" value="RT_POL"/>
    <property type="match status" value="1"/>
</dbReference>
<dbReference type="PROSITE" id="PS50876">
    <property type="entry name" value="ZF_INTEGRASE"/>
    <property type="match status" value="1"/>
</dbReference>
<sequence>MGQASSHSENDLFISHLKESLKVRRIRVRKKDLVSFFSFIFKTCPWFPQEGSIDSRVWGRVGDCLNDYYRVFGPETIPITTFNYYNLIRDVLTNQSDSPDIQRLCKEGHKILISHSRPPSRQAPVTITTSEKASSRPPSRAPSTCPSVAIDIGSHDTGQSSLYPNLATLTDPPIQSPHSRAHTPPQHLPLLANSKTLHNSGSQDDQLNPADQADLEEAAAQYNNPDWPQLTNTPALPPFRPPSYVSTAVPPVAVAAPVLHAPTSGVPGSPTAPNLPGVALAKPSGPIDETVSLLDGVKTLVTKLSDLALLPPAGVMAFPVTRSQGQVSSNTTGRASPHPDTHTIPEEEEADSGESDSEDDEEESSEPTEPTYTHSYKRLNLKTIEKIKTAVANYGPTAPFTVALVESLSERWLTPSDWFFLSRAALSGGDNILWKSEYEDISKQFAERTRVRPPPKDGPLKIPGASPYQNNDKQAQFPPGLLTQIQSAGLKAWKRLPQKGAATTSLAKIRQGPDESYSDFVSRLQETADRLFGSGESESSFVKHLAYENANPACQSAIRPFRQKELSTMSPLLWYCSAHAVGLAIGAALQNLAPAQLLEPRPAFAIIVTNPAIFQETAPKKIQPPTQLPTQPNAPQASLIKNLGPTTKCPRCKKGFHWASECRSRLDINGQPIIKQGNLEQGPAPGPHYRDELRGFTVHPPIPPANPCPPSNQPRRYVTDLWRATAGSAGLDLCTTTDTILTTQNSPLTLPVGIYGPLPPQTFGLILAEPALPSKGIQVLPGILDNDFEGEIHIILSTTKDLVTIPKGTRLAQIVILPLQQINSNFHKPYRGASAPGSSDVYWVQQISQQRPTLKLKLNGKLFSGILDTGADATVISYTHWPRNWPLTTVATHLRGIGQATNPQQSAQMLKWEDSEGNNGHITPYVLPNLPVNLWGRDILSQMKLVMCSPNDTVMTQMLSQGYLPGQGLGKNNQGITQPITITPKKDKTGLGFHQNLPRSRAIDIPVPHADKISWKITDPVWVDQWPLTYEKTLAAIALVQEQLAAGHIEPTNSPWNTPIFIIKKKSGSWRLLQDLRAVNKVMVPMGALQPGLPSPVAIPLNYHKIVIDLKDCFFTIPLHPEDRPYFAFSVPQINFQSPMPRYQWKVLPQGMANSPTLCQKFVAAAIAPVRSQWPEAYILHYMDDILLACDSAEAAKACYAHIISCLTSYGLKIAPDKVQVSEPFSYLGFELHHQQVFTPRVCLKTDHLKTLNDFQKLLGDIQWLRPYLKLPTSALVPLNNILKGDPNPLSVRALTPEAKQSLALINKAIQNQSVQQISYNLPLVLLLLPTPHTPTAVFWQPNGTDPTKNGSPLLWLHLPASPSKVLLTYPSLLAMLIIKGRYTGRQLFGRDPHSIIIPYTQDQLTWLLQTSDEWAIALSSFTGDIDNHYPSDPVIQFAKLHQFIFPKITKCAPIPQATLVFTDGSSNGIAAYVIDNQPISIKSPYLSAQLVELYAILQVFTVLAHQPFNLYTDSAYIAQSVPLLETVPFIKSSTNATPLFSKLQQLILNRQHPFFIGHLRAHLNLPGPLAEGNALADAATQIFPIISDPIHEATQAHTLHHLNAHTLRLLYKITREQARDIVKACKQCVVATPVPHLGVNPRGLVPNAIWQMDVTHFTPFGKQRFVHVTVDTFSGFILATPQTGEASKNVISHVIHCLATIGKPHTIKTDNGPGYTGKNFQDFCQKLQIKHVTGIPYNPQGQGVVERAHQTLKNALNRLARSPLGFSMQQPRNLLSHALFQLNFLQLDSQGRSAADRLWHPQTSQQHATVMWRDPLTSVWKGPDPVLIWGRGSACIYDQKEDGPRWLPERLIRHINNQTAPLCDRPSNPNTAPGPKGSP</sequence>